<accession>P67245</accession>
<accession>P52082</accession>
<proteinExistence type="inferred from homology"/>
<sequence length="164" mass="18641">MERFLENAMYASRWLLAPVYFGLSLALVALALKFFQEIIHVLPNIFSMAESDLILVLLSLVDMTLVGGLLVMVMFSGYENFVSQLDISENKEKLNWLGKMDATSLKNKVAASIVAISSIHLLRVFMDAKNVPDNKLMWYVIIHLTFVLSAFVMGYLDRLTRHNH</sequence>
<organism>
    <name type="scientific">Escherichia coli O157:H7</name>
    <dbReference type="NCBI Taxonomy" id="83334"/>
    <lineage>
        <taxon>Bacteria</taxon>
        <taxon>Pseudomonadati</taxon>
        <taxon>Pseudomonadota</taxon>
        <taxon>Gammaproteobacteria</taxon>
        <taxon>Enterobacterales</taxon>
        <taxon>Enterobacteriaceae</taxon>
        <taxon>Escherichia</taxon>
    </lineage>
</organism>
<dbReference type="EMBL" id="AE005174">
    <property type="protein sequence ID" value="AAG58138.1"/>
    <property type="molecule type" value="Genomic_DNA"/>
</dbReference>
<dbReference type="EMBL" id="BA000007">
    <property type="protein sequence ID" value="BAB37309.1"/>
    <property type="molecule type" value="Genomic_DNA"/>
</dbReference>
<dbReference type="PIR" id="F85959">
    <property type="entry name" value="F85959"/>
</dbReference>
<dbReference type="PIR" id="F91114">
    <property type="entry name" value="F91114"/>
</dbReference>
<dbReference type="RefSeq" id="NP_311913.1">
    <property type="nucleotide sequence ID" value="NC_002695.1"/>
</dbReference>
<dbReference type="RefSeq" id="WP_000439331.1">
    <property type="nucleotide sequence ID" value="NZ_VOAI01000009.1"/>
</dbReference>
<dbReference type="GeneID" id="916291"/>
<dbReference type="KEGG" id="ece:Z4355"/>
<dbReference type="KEGG" id="ecs:ECs_3886"/>
<dbReference type="PATRIC" id="fig|386585.9.peg.4054"/>
<dbReference type="eggNOG" id="COG2862">
    <property type="taxonomic scope" value="Bacteria"/>
</dbReference>
<dbReference type="HOGENOM" id="CLU_097887_1_1_6"/>
<dbReference type="OMA" id="HTIMWQV"/>
<dbReference type="Proteomes" id="UP000000558">
    <property type="component" value="Chromosome"/>
</dbReference>
<dbReference type="Proteomes" id="UP000002519">
    <property type="component" value="Chromosome"/>
</dbReference>
<dbReference type="GO" id="GO:0005886">
    <property type="term" value="C:plasma membrane"/>
    <property type="evidence" value="ECO:0007669"/>
    <property type="project" value="UniProtKB-SubCell"/>
</dbReference>
<dbReference type="HAMAP" id="MF_00143">
    <property type="entry name" value="UPF0114"/>
    <property type="match status" value="1"/>
</dbReference>
<dbReference type="InterPro" id="IPR005134">
    <property type="entry name" value="UPF0114"/>
</dbReference>
<dbReference type="InterPro" id="IPR020761">
    <property type="entry name" value="UPF0114_bac"/>
</dbReference>
<dbReference type="NCBIfam" id="TIGR00645">
    <property type="entry name" value="HI0507"/>
    <property type="match status" value="1"/>
</dbReference>
<dbReference type="PANTHER" id="PTHR38596">
    <property type="entry name" value="UPF0114 PROTEIN YQHA"/>
    <property type="match status" value="1"/>
</dbReference>
<dbReference type="PANTHER" id="PTHR38596:SF1">
    <property type="entry name" value="UPF0114 PROTEIN YQHA"/>
    <property type="match status" value="1"/>
</dbReference>
<dbReference type="Pfam" id="PF03350">
    <property type="entry name" value="UPF0114"/>
    <property type="match status" value="1"/>
</dbReference>
<feature type="chain" id="PRO_0000214368" description="UPF0114 protein YqhA">
    <location>
        <begin position="1"/>
        <end position="164"/>
    </location>
</feature>
<feature type="transmembrane region" description="Helical" evidence="1">
    <location>
        <begin position="15"/>
        <end position="35"/>
    </location>
</feature>
<feature type="transmembrane region" description="Helical" evidence="1">
    <location>
        <begin position="53"/>
        <end position="73"/>
    </location>
</feature>
<feature type="transmembrane region" description="Helical" evidence="1">
    <location>
        <begin position="136"/>
        <end position="156"/>
    </location>
</feature>
<keyword id="KW-1003">Cell membrane</keyword>
<keyword id="KW-0472">Membrane</keyword>
<keyword id="KW-1185">Reference proteome</keyword>
<keyword id="KW-0812">Transmembrane</keyword>
<keyword id="KW-1133">Transmembrane helix</keyword>
<gene>
    <name type="primary">yqhA</name>
    <name type="ordered locus">Z4355</name>
    <name type="ordered locus">ECs3886</name>
</gene>
<protein>
    <recommendedName>
        <fullName>UPF0114 protein YqhA</fullName>
    </recommendedName>
</protein>
<name>YQHA_ECO57</name>
<reference key="1">
    <citation type="journal article" date="2001" name="Nature">
        <title>Genome sequence of enterohaemorrhagic Escherichia coli O157:H7.</title>
        <authorList>
            <person name="Perna N.T."/>
            <person name="Plunkett G. III"/>
            <person name="Burland V."/>
            <person name="Mau B."/>
            <person name="Glasner J.D."/>
            <person name="Rose D.J."/>
            <person name="Mayhew G.F."/>
            <person name="Evans P.S."/>
            <person name="Gregor J."/>
            <person name="Kirkpatrick H.A."/>
            <person name="Posfai G."/>
            <person name="Hackett J."/>
            <person name="Klink S."/>
            <person name="Boutin A."/>
            <person name="Shao Y."/>
            <person name="Miller L."/>
            <person name="Grotbeck E.J."/>
            <person name="Davis N.W."/>
            <person name="Lim A."/>
            <person name="Dimalanta E.T."/>
            <person name="Potamousis K."/>
            <person name="Apodaca J."/>
            <person name="Anantharaman T.S."/>
            <person name="Lin J."/>
            <person name="Yen G."/>
            <person name="Schwartz D.C."/>
            <person name="Welch R.A."/>
            <person name="Blattner F.R."/>
        </authorList>
    </citation>
    <scope>NUCLEOTIDE SEQUENCE [LARGE SCALE GENOMIC DNA]</scope>
    <source>
        <strain>O157:H7 / EDL933 / ATCC 700927 / EHEC</strain>
    </source>
</reference>
<reference key="2">
    <citation type="journal article" date="2001" name="DNA Res.">
        <title>Complete genome sequence of enterohemorrhagic Escherichia coli O157:H7 and genomic comparison with a laboratory strain K-12.</title>
        <authorList>
            <person name="Hayashi T."/>
            <person name="Makino K."/>
            <person name="Ohnishi M."/>
            <person name="Kurokawa K."/>
            <person name="Ishii K."/>
            <person name="Yokoyama K."/>
            <person name="Han C.-G."/>
            <person name="Ohtsubo E."/>
            <person name="Nakayama K."/>
            <person name="Murata T."/>
            <person name="Tanaka M."/>
            <person name="Tobe T."/>
            <person name="Iida T."/>
            <person name="Takami H."/>
            <person name="Honda T."/>
            <person name="Sasakawa C."/>
            <person name="Ogasawara N."/>
            <person name="Yasunaga T."/>
            <person name="Kuhara S."/>
            <person name="Shiba T."/>
            <person name="Hattori M."/>
            <person name="Shinagawa H."/>
        </authorList>
    </citation>
    <scope>NUCLEOTIDE SEQUENCE [LARGE SCALE GENOMIC DNA]</scope>
    <source>
        <strain>O157:H7 / Sakai / RIMD 0509952 / EHEC</strain>
    </source>
</reference>
<evidence type="ECO:0000255" key="1"/>
<evidence type="ECO:0000305" key="2"/>
<comment type="subcellular location">
    <subcellularLocation>
        <location evidence="2">Cell membrane</location>
        <topology evidence="2">Multi-pass membrane protein</topology>
    </subcellularLocation>
</comment>
<comment type="similarity">
    <text evidence="2">Belongs to the UPF0114 family.</text>
</comment>